<name>PIMT_SHEB9</name>
<organism>
    <name type="scientific">Shewanella baltica (strain OS195)</name>
    <dbReference type="NCBI Taxonomy" id="399599"/>
    <lineage>
        <taxon>Bacteria</taxon>
        <taxon>Pseudomonadati</taxon>
        <taxon>Pseudomonadota</taxon>
        <taxon>Gammaproteobacteria</taxon>
        <taxon>Alteromonadales</taxon>
        <taxon>Shewanellaceae</taxon>
        <taxon>Shewanella</taxon>
    </lineage>
</organism>
<feature type="chain" id="PRO_1000093282" description="Protein-L-isoaspartate O-methyltransferase">
    <location>
        <begin position="1"/>
        <end position="211"/>
    </location>
</feature>
<feature type="active site" evidence="1">
    <location>
        <position position="62"/>
    </location>
</feature>
<dbReference type="EC" id="2.1.1.77" evidence="1"/>
<dbReference type="EMBL" id="CP000891">
    <property type="protein sequence ID" value="ABX50435.1"/>
    <property type="molecule type" value="Genomic_DNA"/>
</dbReference>
<dbReference type="RefSeq" id="WP_012197442.1">
    <property type="nucleotide sequence ID" value="NC_009997.1"/>
</dbReference>
<dbReference type="SMR" id="A9KYG4"/>
<dbReference type="KEGG" id="sbn:Sbal195_3273"/>
<dbReference type="HOGENOM" id="CLU_055432_2_0_6"/>
<dbReference type="Proteomes" id="UP000000770">
    <property type="component" value="Chromosome"/>
</dbReference>
<dbReference type="GO" id="GO:0005737">
    <property type="term" value="C:cytoplasm"/>
    <property type="evidence" value="ECO:0007669"/>
    <property type="project" value="UniProtKB-SubCell"/>
</dbReference>
<dbReference type="GO" id="GO:0004719">
    <property type="term" value="F:protein-L-isoaspartate (D-aspartate) O-methyltransferase activity"/>
    <property type="evidence" value="ECO:0007669"/>
    <property type="project" value="UniProtKB-UniRule"/>
</dbReference>
<dbReference type="GO" id="GO:0032259">
    <property type="term" value="P:methylation"/>
    <property type="evidence" value="ECO:0007669"/>
    <property type="project" value="UniProtKB-KW"/>
</dbReference>
<dbReference type="GO" id="GO:0036211">
    <property type="term" value="P:protein modification process"/>
    <property type="evidence" value="ECO:0007669"/>
    <property type="project" value="UniProtKB-UniRule"/>
</dbReference>
<dbReference type="GO" id="GO:0030091">
    <property type="term" value="P:protein repair"/>
    <property type="evidence" value="ECO:0007669"/>
    <property type="project" value="UniProtKB-UniRule"/>
</dbReference>
<dbReference type="CDD" id="cd02440">
    <property type="entry name" value="AdoMet_MTases"/>
    <property type="match status" value="1"/>
</dbReference>
<dbReference type="FunFam" id="3.40.50.150:FF:000010">
    <property type="entry name" value="Protein-L-isoaspartate O-methyltransferase"/>
    <property type="match status" value="1"/>
</dbReference>
<dbReference type="Gene3D" id="3.40.50.150">
    <property type="entry name" value="Vaccinia Virus protein VP39"/>
    <property type="match status" value="1"/>
</dbReference>
<dbReference type="HAMAP" id="MF_00090">
    <property type="entry name" value="PIMT"/>
    <property type="match status" value="1"/>
</dbReference>
<dbReference type="InterPro" id="IPR000682">
    <property type="entry name" value="PCMT"/>
</dbReference>
<dbReference type="InterPro" id="IPR029063">
    <property type="entry name" value="SAM-dependent_MTases_sf"/>
</dbReference>
<dbReference type="NCBIfam" id="TIGR00080">
    <property type="entry name" value="pimt"/>
    <property type="match status" value="1"/>
</dbReference>
<dbReference type="NCBIfam" id="NF001453">
    <property type="entry name" value="PRK00312.1"/>
    <property type="match status" value="1"/>
</dbReference>
<dbReference type="PANTHER" id="PTHR11579">
    <property type="entry name" value="PROTEIN-L-ISOASPARTATE O-METHYLTRANSFERASE"/>
    <property type="match status" value="1"/>
</dbReference>
<dbReference type="PANTHER" id="PTHR11579:SF0">
    <property type="entry name" value="PROTEIN-L-ISOASPARTATE(D-ASPARTATE) O-METHYLTRANSFERASE"/>
    <property type="match status" value="1"/>
</dbReference>
<dbReference type="Pfam" id="PF01135">
    <property type="entry name" value="PCMT"/>
    <property type="match status" value="1"/>
</dbReference>
<dbReference type="SUPFAM" id="SSF53335">
    <property type="entry name" value="S-adenosyl-L-methionine-dependent methyltransferases"/>
    <property type="match status" value="1"/>
</dbReference>
<dbReference type="PROSITE" id="PS01279">
    <property type="entry name" value="PCMT"/>
    <property type="match status" value="1"/>
</dbReference>
<protein>
    <recommendedName>
        <fullName evidence="1">Protein-L-isoaspartate O-methyltransferase</fullName>
        <ecNumber evidence="1">2.1.1.77</ecNumber>
    </recommendedName>
    <alternativeName>
        <fullName evidence="1">L-isoaspartyl protein carboxyl methyltransferase</fullName>
    </alternativeName>
    <alternativeName>
        <fullName evidence="1">Protein L-isoaspartyl methyltransferase</fullName>
    </alternativeName>
    <alternativeName>
        <fullName evidence="1">Protein-beta-aspartate methyltransferase</fullName>
        <shortName evidence="1">PIMT</shortName>
    </alternativeName>
</protein>
<comment type="function">
    <text evidence="1">Catalyzes the methyl esterification of L-isoaspartyl residues in peptides and proteins that result from spontaneous decomposition of normal L-aspartyl and L-asparaginyl residues. It plays a role in the repair and/or degradation of damaged proteins.</text>
</comment>
<comment type="catalytic activity">
    <reaction evidence="1">
        <text>[protein]-L-isoaspartate + S-adenosyl-L-methionine = [protein]-L-isoaspartate alpha-methyl ester + S-adenosyl-L-homocysteine</text>
        <dbReference type="Rhea" id="RHEA:12705"/>
        <dbReference type="Rhea" id="RHEA-COMP:12143"/>
        <dbReference type="Rhea" id="RHEA-COMP:12144"/>
        <dbReference type="ChEBI" id="CHEBI:57856"/>
        <dbReference type="ChEBI" id="CHEBI:59789"/>
        <dbReference type="ChEBI" id="CHEBI:90596"/>
        <dbReference type="ChEBI" id="CHEBI:90598"/>
        <dbReference type="EC" id="2.1.1.77"/>
    </reaction>
</comment>
<comment type="subcellular location">
    <subcellularLocation>
        <location evidence="1">Cytoplasm</location>
    </subcellularLocation>
</comment>
<comment type="similarity">
    <text evidence="1">Belongs to the methyltransferase superfamily. L-isoaspartyl/D-aspartyl protein methyltransferase family.</text>
</comment>
<proteinExistence type="inferred from homology"/>
<sequence>MTRVALTSAVNLAKKLHDAGIRNQAVLKAISHTPREMFLDNALAHKAYENTALPIGQGQTISQPYIVARMTELLLHKMPQRVLEVGTGSGYQAAILAQLVPQLCTIERIKGLQIQARQRLKRLDLHNVSFKYGDGWLGWANRSPFDAIMVTAAASTIPEALLSQLAEGGVLVLPVGEDTQQLMRITRTGERFSSETIETVKFVPLINGELA</sequence>
<gene>
    <name evidence="1" type="primary">pcm</name>
    <name type="ordered locus">Sbal195_3273</name>
</gene>
<keyword id="KW-0963">Cytoplasm</keyword>
<keyword id="KW-0489">Methyltransferase</keyword>
<keyword id="KW-0949">S-adenosyl-L-methionine</keyword>
<keyword id="KW-0808">Transferase</keyword>
<reference key="1">
    <citation type="submission" date="2007-11" db="EMBL/GenBank/DDBJ databases">
        <title>Complete sequence of chromosome of Shewanella baltica OS195.</title>
        <authorList>
            <consortium name="US DOE Joint Genome Institute"/>
            <person name="Copeland A."/>
            <person name="Lucas S."/>
            <person name="Lapidus A."/>
            <person name="Barry K."/>
            <person name="Glavina del Rio T."/>
            <person name="Dalin E."/>
            <person name="Tice H."/>
            <person name="Pitluck S."/>
            <person name="Chain P."/>
            <person name="Malfatti S."/>
            <person name="Shin M."/>
            <person name="Vergez L."/>
            <person name="Schmutz J."/>
            <person name="Larimer F."/>
            <person name="Land M."/>
            <person name="Hauser L."/>
            <person name="Kyrpides N."/>
            <person name="Kim E."/>
            <person name="Brettar I."/>
            <person name="Rodrigues J."/>
            <person name="Konstantinidis K."/>
            <person name="Klappenbach J."/>
            <person name="Hofle M."/>
            <person name="Tiedje J."/>
            <person name="Richardson P."/>
        </authorList>
    </citation>
    <scope>NUCLEOTIDE SEQUENCE [LARGE SCALE GENOMIC DNA]</scope>
    <source>
        <strain>OS195</strain>
    </source>
</reference>
<evidence type="ECO:0000255" key="1">
    <source>
        <dbReference type="HAMAP-Rule" id="MF_00090"/>
    </source>
</evidence>
<accession>A9KYG4</accession>